<evidence type="ECO:0000255" key="1">
    <source>
        <dbReference type="HAMAP-Rule" id="MF_00075"/>
    </source>
</evidence>
<protein>
    <recommendedName>
        <fullName evidence="1">Translation initiation factor IF-1</fullName>
    </recommendedName>
</protein>
<name>IF1_LACP3</name>
<feature type="chain" id="PRO_0000338844" description="Translation initiation factor IF-1">
    <location>
        <begin position="1"/>
        <end position="72"/>
    </location>
</feature>
<feature type="domain" description="S1-like" evidence="1">
    <location>
        <begin position="1"/>
        <end position="72"/>
    </location>
</feature>
<accession>Q035A5</accession>
<gene>
    <name evidence="1" type="primary">infA</name>
    <name type="ordered locus">LSEI_2481</name>
</gene>
<comment type="function">
    <text evidence="1">One of the essential components for the initiation of protein synthesis. Stabilizes the binding of IF-2 and IF-3 on the 30S subunit to which N-formylmethionyl-tRNA(fMet) subsequently binds. Helps modulate mRNA selection, yielding the 30S pre-initiation complex (PIC). Upon addition of the 50S ribosomal subunit IF-1, IF-2 and IF-3 are released leaving the mature 70S translation initiation complex.</text>
</comment>
<comment type="subunit">
    <text evidence="1">Component of the 30S ribosomal translation pre-initiation complex which assembles on the 30S ribosome in the order IF-2 and IF-3, IF-1 and N-formylmethionyl-tRNA(fMet); mRNA recruitment can occur at any time during PIC assembly.</text>
</comment>
<comment type="subcellular location">
    <subcellularLocation>
        <location evidence="1">Cytoplasm</location>
    </subcellularLocation>
</comment>
<comment type="similarity">
    <text evidence="1">Belongs to the IF-1 family.</text>
</comment>
<proteinExistence type="inferred from homology"/>
<organism>
    <name type="scientific">Lacticaseibacillus paracasei (strain ATCC 334 / BCRC 17002 / CCUG 31169 / CIP 107868 / KCTC 3260 / NRRL B-441)</name>
    <name type="common">Lactobacillus paracasei</name>
    <dbReference type="NCBI Taxonomy" id="321967"/>
    <lineage>
        <taxon>Bacteria</taxon>
        <taxon>Bacillati</taxon>
        <taxon>Bacillota</taxon>
        <taxon>Bacilli</taxon>
        <taxon>Lactobacillales</taxon>
        <taxon>Lactobacillaceae</taxon>
        <taxon>Lacticaseibacillus</taxon>
    </lineage>
</organism>
<dbReference type="EMBL" id="CP000423">
    <property type="protein sequence ID" value="ABJ71217.1"/>
    <property type="molecule type" value="Genomic_DNA"/>
</dbReference>
<dbReference type="RefSeq" id="WP_003567521.1">
    <property type="nucleotide sequence ID" value="NC_008526.1"/>
</dbReference>
<dbReference type="RefSeq" id="YP_807659.1">
    <property type="nucleotide sequence ID" value="NC_008526.1"/>
</dbReference>
<dbReference type="SMR" id="Q035A5"/>
<dbReference type="STRING" id="321967.LSEI_2481"/>
<dbReference type="PaxDb" id="321967-LSEI_2481"/>
<dbReference type="GeneID" id="69830155"/>
<dbReference type="KEGG" id="lca:LSEI_2481"/>
<dbReference type="PATRIC" id="fig|321967.11.peg.2435"/>
<dbReference type="HOGENOM" id="CLU_151267_1_0_9"/>
<dbReference type="PRO" id="PR:Q035A5"/>
<dbReference type="Proteomes" id="UP000001651">
    <property type="component" value="Chromosome"/>
</dbReference>
<dbReference type="GO" id="GO:0005829">
    <property type="term" value="C:cytosol"/>
    <property type="evidence" value="ECO:0007669"/>
    <property type="project" value="TreeGrafter"/>
</dbReference>
<dbReference type="GO" id="GO:0043022">
    <property type="term" value="F:ribosome binding"/>
    <property type="evidence" value="ECO:0007669"/>
    <property type="project" value="UniProtKB-UniRule"/>
</dbReference>
<dbReference type="GO" id="GO:0019843">
    <property type="term" value="F:rRNA binding"/>
    <property type="evidence" value="ECO:0007669"/>
    <property type="project" value="UniProtKB-UniRule"/>
</dbReference>
<dbReference type="GO" id="GO:0003743">
    <property type="term" value="F:translation initiation factor activity"/>
    <property type="evidence" value="ECO:0007669"/>
    <property type="project" value="UniProtKB-UniRule"/>
</dbReference>
<dbReference type="CDD" id="cd04451">
    <property type="entry name" value="S1_IF1"/>
    <property type="match status" value="1"/>
</dbReference>
<dbReference type="FunFam" id="2.40.50.140:FF:000002">
    <property type="entry name" value="Translation initiation factor IF-1"/>
    <property type="match status" value="1"/>
</dbReference>
<dbReference type="Gene3D" id="2.40.50.140">
    <property type="entry name" value="Nucleic acid-binding proteins"/>
    <property type="match status" value="1"/>
</dbReference>
<dbReference type="HAMAP" id="MF_00075">
    <property type="entry name" value="IF_1"/>
    <property type="match status" value="1"/>
</dbReference>
<dbReference type="InterPro" id="IPR012340">
    <property type="entry name" value="NA-bd_OB-fold"/>
</dbReference>
<dbReference type="InterPro" id="IPR006196">
    <property type="entry name" value="RNA-binding_domain_S1_IF1"/>
</dbReference>
<dbReference type="InterPro" id="IPR003029">
    <property type="entry name" value="S1_domain"/>
</dbReference>
<dbReference type="InterPro" id="IPR004368">
    <property type="entry name" value="TIF_IF1"/>
</dbReference>
<dbReference type="NCBIfam" id="TIGR00008">
    <property type="entry name" value="infA"/>
    <property type="match status" value="1"/>
</dbReference>
<dbReference type="PANTHER" id="PTHR33370">
    <property type="entry name" value="TRANSLATION INITIATION FACTOR IF-1, CHLOROPLASTIC"/>
    <property type="match status" value="1"/>
</dbReference>
<dbReference type="PANTHER" id="PTHR33370:SF1">
    <property type="entry name" value="TRANSLATION INITIATION FACTOR IF-1, CHLOROPLASTIC"/>
    <property type="match status" value="1"/>
</dbReference>
<dbReference type="Pfam" id="PF01176">
    <property type="entry name" value="eIF-1a"/>
    <property type="match status" value="1"/>
</dbReference>
<dbReference type="SMART" id="SM00316">
    <property type="entry name" value="S1"/>
    <property type="match status" value="1"/>
</dbReference>
<dbReference type="SUPFAM" id="SSF50249">
    <property type="entry name" value="Nucleic acid-binding proteins"/>
    <property type="match status" value="1"/>
</dbReference>
<dbReference type="PROSITE" id="PS50832">
    <property type="entry name" value="S1_IF1_TYPE"/>
    <property type="match status" value="1"/>
</dbReference>
<reference key="1">
    <citation type="journal article" date="2006" name="Proc. Natl. Acad. Sci. U.S.A.">
        <title>Comparative genomics of the lactic acid bacteria.</title>
        <authorList>
            <person name="Makarova K.S."/>
            <person name="Slesarev A."/>
            <person name="Wolf Y.I."/>
            <person name="Sorokin A."/>
            <person name="Mirkin B."/>
            <person name="Koonin E.V."/>
            <person name="Pavlov A."/>
            <person name="Pavlova N."/>
            <person name="Karamychev V."/>
            <person name="Polouchine N."/>
            <person name="Shakhova V."/>
            <person name="Grigoriev I."/>
            <person name="Lou Y."/>
            <person name="Rohksar D."/>
            <person name="Lucas S."/>
            <person name="Huang K."/>
            <person name="Goodstein D.M."/>
            <person name="Hawkins T."/>
            <person name="Plengvidhya V."/>
            <person name="Welker D."/>
            <person name="Hughes J."/>
            <person name="Goh Y."/>
            <person name="Benson A."/>
            <person name="Baldwin K."/>
            <person name="Lee J.-H."/>
            <person name="Diaz-Muniz I."/>
            <person name="Dosti B."/>
            <person name="Smeianov V."/>
            <person name="Wechter W."/>
            <person name="Barabote R."/>
            <person name="Lorca G."/>
            <person name="Altermann E."/>
            <person name="Barrangou R."/>
            <person name="Ganesan B."/>
            <person name="Xie Y."/>
            <person name="Rawsthorne H."/>
            <person name="Tamir D."/>
            <person name="Parker C."/>
            <person name="Breidt F."/>
            <person name="Broadbent J.R."/>
            <person name="Hutkins R."/>
            <person name="O'Sullivan D."/>
            <person name="Steele J."/>
            <person name="Unlu G."/>
            <person name="Saier M.H. Jr."/>
            <person name="Klaenhammer T."/>
            <person name="Richardson P."/>
            <person name="Kozyavkin S."/>
            <person name="Weimer B.C."/>
            <person name="Mills D.A."/>
        </authorList>
    </citation>
    <scope>NUCLEOTIDE SEQUENCE [LARGE SCALE GENOMIC DNA]</scope>
    <source>
        <strain>ATCC 334 / BCRC 17002 / CCUG 31169 / CIP 107868 / KCTC 3260 / NRRL B-441</strain>
    </source>
</reference>
<keyword id="KW-0963">Cytoplasm</keyword>
<keyword id="KW-0396">Initiation factor</keyword>
<keyword id="KW-0648">Protein biosynthesis</keyword>
<keyword id="KW-1185">Reference proteome</keyword>
<keyword id="KW-0694">RNA-binding</keyword>
<keyword id="KW-0699">rRNA-binding</keyword>
<sequence length="72" mass="8148">MAKDDVIEIQGTVTDTLPNAMFKVKLENGAEILAHVSGKIRMHYIRILPGDKVTVELSPYDLTKGRITYRFK</sequence>